<sequence length="103" mass="10803">ASRSQAEDVRVEGAFPVTMLPGDGVGPELMAAVGVIECLKLGDGLFLQCCEEVAELYPKNIANPTATLLASCMMLDHLKTSDMGGYATCQDFTEAVIGALSHP</sequence>
<feature type="chain" id="PRO_0000083591" description="Isocitrate dehydrogenase [NAD] subunit beta, mitochondrial">
    <location>
        <begin position="1"/>
        <end position="103"/>
    </location>
</feature>
<feature type="non-consecutive residues" evidence="2">
    <location>
        <begin position="33"/>
        <end position="34"/>
    </location>
</feature>
<feature type="non-consecutive residues" evidence="2">
    <location>
        <begin position="40"/>
        <end position="41"/>
    </location>
</feature>
<feature type="non-consecutive residues" evidence="2">
    <location>
        <begin position="59"/>
        <end position="60"/>
    </location>
</feature>
<feature type="non-consecutive residues" evidence="2">
    <location>
        <begin position="79"/>
        <end position="80"/>
    </location>
</feature>
<evidence type="ECO:0000250" key="1">
    <source>
        <dbReference type="UniProtKB" id="O43837"/>
    </source>
</evidence>
<evidence type="ECO:0000305" key="2"/>
<keyword id="KW-0903">Direct protein sequencing</keyword>
<keyword id="KW-0496">Mitochondrion</keyword>
<keyword id="KW-1185">Reference proteome</keyword>
<keyword id="KW-0816">Tricarboxylic acid cycle</keyword>
<reference key="1">
    <citation type="journal article" date="1990" name="Biochemistry">
        <title>Subunit location and sequences of the cysteinyl peptides of pig heart NAD-dependent isocitrate dehydrogenase.</title>
        <authorList>
            <person name="Huang Y.C."/>
            <person name="Colman R.F."/>
        </authorList>
    </citation>
    <scope>PROTEIN SEQUENCE</scope>
    <source>
        <tissue>Heart</tissue>
    </source>
</reference>
<gene>
    <name type="primary">IDH3B</name>
</gene>
<name>IDH3B_PIG</name>
<dbReference type="PIR" id="B35834">
    <property type="entry name" value="B35834"/>
</dbReference>
<dbReference type="SMR" id="P56472"/>
<dbReference type="STRING" id="9823.ENSSSCP00000061140"/>
<dbReference type="PaxDb" id="9823-ENSSSCP00000007635"/>
<dbReference type="PeptideAtlas" id="P56472"/>
<dbReference type="eggNOG" id="KOG0784">
    <property type="taxonomic scope" value="Eukaryota"/>
</dbReference>
<dbReference type="InParanoid" id="P56472"/>
<dbReference type="SABIO-RK" id="P56472"/>
<dbReference type="Proteomes" id="UP000008227">
    <property type="component" value="Unplaced"/>
</dbReference>
<dbReference type="Proteomes" id="UP000314985">
    <property type="component" value="Unplaced"/>
</dbReference>
<dbReference type="Proteomes" id="UP000694570">
    <property type="component" value="Unplaced"/>
</dbReference>
<dbReference type="Proteomes" id="UP000694571">
    <property type="component" value="Unplaced"/>
</dbReference>
<dbReference type="Proteomes" id="UP000694720">
    <property type="component" value="Unplaced"/>
</dbReference>
<dbReference type="Proteomes" id="UP000694722">
    <property type="component" value="Unplaced"/>
</dbReference>
<dbReference type="Proteomes" id="UP000694723">
    <property type="component" value="Unplaced"/>
</dbReference>
<dbReference type="Proteomes" id="UP000694724">
    <property type="component" value="Unplaced"/>
</dbReference>
<dbReference type="Proteomes" id="UP000694725">
    <property type="component" value="Unplaced"/>
</dbReference>
<dbReference type="Proteomes" id="UP000694726">
    <property type="component" value="Unplaced"/>
</dbReference>
<dbReference type="Proteomes" id="UP000694727">
    <property type="component" value="Unplaced"/>
</dbReference>
<dbReference type="Proteomes" id="UP000694728">
    <property type="component" value="Unplaced"/>
</dbReference>
<dbReference type="GO" id="GO:0005739">
    <property type="term" value="C:mitochondrion"/>
    <property type="evidence" value="ECO:0007669"/>
    <property type="project" value="UniProtKB-SubCell"/>
</dbReference>
<dbReference type="GO" id="GO:0008047">
    <property type="term" value="F:enzyme activator activity"/>
    <property type="evidence" value="ECO:0000314"/>
    <property type="project" value="FlyBase"/>
</dbReference>
<dbReference type="GO" id="GO:0006099">
    <property type="term" value="P:tricarboxylic acid cycle"/>
    <property type="evidence" value="ECO:0007669"/>
    <property type="project" value="UniProtKB-KW"/>
</dbReference>
<dbReference type="Gene3D" id="3.40.718.10">
    <property type="entry name" value="Isopropylmalate Dehydrogenase"/>
    <property type="match status" value="1"/>
</dbReference>
<dbReference type="PANTHER" id="PTHR11835">
    <property type="entry name" value="DECARBOXYLATING DEHYDROGENASES-ISOCITRATE, ISOPROPYLMALATE, TARTRATE"/>
    <property type="match status" value="1"/>
</dbReference>
<dbReference type="PANTHER" id="PTHR11835:SF60">
    <property type="entry name" value="ISOCITRATE DEHYDROGENASE [NAD] SUBUNIT, MITOCHONDRIAL"/>
    <property type="match status" value="1"/>
</dbReference>
<dbReference type="SUPFAM" id="SSF53659">
    <property type="entry name" value="Isocitrate/Isopropylmalate dehydrogenase-like"/>
    <property type="match status" value="1"/>
</dbReference>
<organism>
    <name type="scientific">Sus scrofa</name>
    <name type="common">Pig</name>
    <dbReference type="NCBI Taxonomy" id="9823"/>
    <lineage>
        <taxon>Eukaryota</taxon>
        <taxon>Metazoa</taxon>
        <taxon>Chordata</taxon>
        <taxon>Craniata</taxon>
        <taxon>Vertebrata</taxon>
        <taxon>Euteleostomi</taxon>
        <taxon>Mammalia</taxon>
        <taxon>Eutheria</taxon>
        <taxon>Laurasiatheria</taxon>
        <taxon>Artiodactyla</taxon>
        <taxon>Suina</taxon>
        <taxon>Suidae</taxon>
        <taxon>Sus</taxon>
    </lineage>
</organism>
<protein>
    <recommendedName>
        <fullName>Isocitrate dehydrogenase [NAD] subunit beta, mitochondrial</fullName>
    </recommendedName>
    <alternativeName>
        <fullName>Isocitric dehydrogenase subunit beta</fullName>
    </alternativeName>
    <alternativeName>
        <fullName>NAD(+)-specific ICDH subunit beta</fullName>
    </alternativeName>
</protein>
<accession>P56472</accession>
<proteinExistence type="evidence at protein level"/>
<comment type="function">
    <text evidence="1">Plays a structural role to facilitate the assembly and ensure the full activity of the enzyme catalyzing the decarboxylation of isocitrate (ICT) into alpha-ketoglutarate. The heterodimer composed of the alpha (IDH3A) and beta (IDH3B) subunits and the heterodimer composed of the alpha (IDH3A) and gamma (IDH3G) subunits, have considerable basal activity but the full activity of the heterotetramer (containing two subunits of IDH3A, one of IDH3B and one of IDH3G) requires the assembly and cooperative function of both heterodimers.</text>
</comment>
<comment type="activity regulation">
    <text evidence="1">The heterotetramer and the heterodimer composed of IDH3A and IDH3G subunits can be allosterically activated by citrate (CIT) or/and ADP, and the two activators can act independently or synergistically. The heterodimer composed of IDH3A and IDH3B subunits cannot be allosterically regulated and the allosteric regulation of the heterotetramer is through the IDH3G subunit and not the IDH3B subunit. The IDH3G subunit contains the allosteric site which consists of a CIT-binding site and an ADP-binding site, and the binding of CIT and ADP causes conformational changes at the allosteric site which are transmitted to the active site in the catalytic subunit (IDH3A) through a cascade of conformational changes at the heterodimer interface, leading to stabilization of the isocitrate-binding at the active site and thus activation of the enzyme. ATP can activate the heterotetramer and the heterodimer composed of IDH3A and IDH3G subunits at low concentrations but inhibits their activities at high concentrations, whereas ATP exhibits only inhibitory effect on the heterodimer composed of IDH3A and IDH3B subunits.</text>
</comment>
<comment type="subunit">
    <text evidence="1">Heterooligomer of subunits alpha (IDH3A), beta (IDH3B), and gamma (IDH3G) in the apparent ratio of 2:1:1. The heterodimer containing one IDH3A and one IDH3B subunit and the heterodimer containing one IDH3A and one IDH3G subunit assemble into a heterotetramer (which contains two subunits of IDH3A, one of IDH3B and one of IDH3G) and further into the heterooctamer.</text>
</comment>
<comment type="subcellular location">
    <subcellularLocation>
        <location>Mitochondrion</location>
    </subcellularLocation>
</comment>
<comment type="similarity">
    <text evidence="2">Belongs to the isocitrate and isopropylmalate dehydrogenases family.</text>
</comment>